<keyword id="KW-0963">Cytoplasm</keyword>
<keyword id="KW-0479">Metal-binding</keyword>
<keyword id="KW-0520">NAD</keyword>
<keyword id="KW-0560">Oxidoreductase</keyword>
<keyword id="KW-1185">Reference proteome</keyword>
<keyword id="KW-0862">Zinc</keyword>
<organism>
    <name type="scientific">Zea mays</name>
    <name type="common">Maize</name>
    <dbReference type="NCBI Taxonomy" id="4577"/>
    <lineage>
        <taxon>Eukaryota</taxon>
        <taxon>Viridiplantae</taxon>
        <taxon>Streptophyta</taxon>
        <taxon>Embryophyta</taxon>
        <taxon>Tracheophyta</taxon>
        <taxon>Spermatophyta</taxon>
        <taxon>Magnoliopsida</taxon>
        <taxon>Liliopsida</taxon>
        <taxon>Poales</taxon>
        <taxon>Poaceae</taxon>
        <taxon>PACMAD clade</taxon>
        <taxon>Panicoideae</taxon>
        <taxon>Andropogonodae</taxon>
        <taxon>Andropogoneae</taxon>
        <taxon>Tripsacinae</taxon>
        <taxon>Zea</taxon>
    </lineage>
</organism>
<proteinExistence type="evidence at transcript level"/>
<gene>
    <name type="primary">ADH2</name>
</gene>
<dbReference type="EC" id="1.1.1.1" evidence="2"/>
<dbReference type="EMBL" id="X01965">
    <property type="protein sequence ID" value="CAA26001.1"/>
    <property type="molecule type" value="mRNA"/>
</dbReference>
<dbReference type="PIR" id="A23084">
    <property type="entry name" value="A23084"/>
</dbReference>
<dbReference type="RefSeq" id="NP_001105410.1">
    <property type="nucleotide sequence ID" value="NM_001111940.1"/>
</dbReference>
<dbReference type="SMR" id="P04707"/>
<dbReference type="FunCoup" id="P04707">
    <property type="interactions" value="201"/>
</dbReference>
<dbReference type="STRING" id="4577.P04707"/>
<dbReference type="PaxDb" id="4577-GRMZM2G098346_P01"/>
<dbReference type="GeneID" id="542364"/>
<dbReference type="KEGG" id="zma:542364"/>
<dbReference type="MaizeGDB" id="13844"/>
<dbReference type="eggNOG" id="KOG0022">
    <property type="taxonomic scope" value="Eukaryota"/>
</dbReference>
<dbReference type="InParanoid" id="P04707"/>
<dbReference type="OrthoDB" id="417550at2759"/>
<dbReference type="Proteomes" id="UP000007305">
    <property type="component" value="Unplaced"/>
</dbReference>
<dbReference type="ExpressionAtlas" id="P04707">
    <property type="expression patterns" value="baseline and differential"/>
</dbReference>
<dbReference type="GO" id="GO:0005829">
    <property type="term" value="C:cytosol"/>
    <property type="evidence" value="ECO:0000318"/>
    <property type="project" value="GO_Central"/>
</dbReference>
<dbReference type="GO" id="GO:0004022">
    <property type="term" value="F:alcohol dehydrogenase (NAD+) activity"/>
    <property type="evidence" value="ECO:0000318"/>
    <property type="project" value="GO_Central"/>
</dbReference>
<dbReference type="GO" id="GO:0051903">
    <property type="term" value="F:S-(hydroxymethyl)glutathione dehydrogenase [NAD(P)+] activity"/>
    <property type="evidence" value="ECO:0000318"/>
    <property type="project" value="GO_Central"/>
</dbReference>
<dbReference type="GO" id="GO:0008270">
    <property type="term" value="F:zinc ion binding"/>
    <property type="evidence" value="ECO:0000318"/>
    <property type="project" value="GO_Central"/>
</dbReference>
<dbReference type="GO" id="GO:0046294">
    <property type="term" value="P:formaldehyde catabolic process"/>
    <property type="evidence" value="ECO:0000318"/>
    <property type="project" value="GO_Central"/>
</dbReference>
<dbReference type="CDD" id="cd08301">
    <property type="entry name" value="alcohol_DH_plants"/>
    <property type="match status" value="1"/>
</dbReference>
<dbReference type="FunFam" id="3.90.180.10:FF:000067">
    <property type="entry name" value="alcohol dehydrogenase 1-like isoform X1"/>
    <property type="match status" value="1"/>
</dbReference>
<dbReference type="FunFam" id="3.40.50.720:FF:001292">
    <property type="entry name" value="Alcohol dehydrogenase class-P"/>
    <property type="match status" value="1"/>
</dbReference>
<dbReference type="Gene3D" id="3.90.180.10">
    <property type="entry name" value="Medium-chain alcohol dehydrogenases, catalytic domain"/>
    <property type="match status" value="1"/>
</dbReference>
<dbReference type="Gene3D" id="3.40.50.720">
    <property type="entry name" value="NAD(P)-binding Rossmann-like Domain"/>
    <property type="match status" value="1"/>
</dbReference>
<dbReference type="InterPro" id="IPR013149">
    <property type="entry name" value="ADH-like_C"/>
</dbReference>
<dbReference type="InterPro" id="IPR013154">
    <property type="entry name" value="ADH-like_N"/>
</dbReference>
<dbReference type="InterPro" id="IPR002328">
    <property type="entry name" value="ADH_Zn_CS"/>
</dbReference>
<dbReference type="InterPro" id="IPR011032">
    <property type="entry name" value="GroES-like_sf"/>
</dbReference>
<dbReference type="InterPro" id="IPR036291">
    <property type="entry name" value="NAD(P)-bd_dom_sf"/>
</dbReference>
<dbReference type="PANTHER" id="PTHR43880">
    <property type="entry name" value="ALCOHOL DEHYDROGENASE"/>
    <property type="match status" value="1"/>
</dbReference>
<dbReference type="PANTHER" id="PTHR43880:SF59">
    <property type="entry name" value="ALCOHOL DEHYDROGENASE 2"/>
    <property type="match status" value="1"/>
</dbReference>
<dbReference type="Pfam" id="PF08240">
    <property type="entry name" value="ADH_N"/>
    <property type="match status" value="1"/>
</dbReference>
<dbReference type="Pfam" id="PF00107">
    <property type="entry name" value="ADH_zinc_N"/>
    <property type="match status" value="1"/>
</dbReference>
<dbReference type="SUPFAM" id="SSF50129">
    <property type="entry name" value="GroES-like"/>
    <property type="match status" value="2"/>
</dbReference>
<dbReference type="SUPFAM" id="SSF51735">
    <property type="entry name" value="NAD(P)-binding Rossmann-fold domains"/>
    <property type="match status" value="1"/>
</dbReference>
<dbReference type="PROSITE" id="PS00059">
    <property type="entry name" value="ADH_ZINC"/>
    <property type="match status" value="1"/>
</dbReference>
<accession>P04707</accession>
<name>ADH2_MAIZE</name>
<sequence>MATAGKVIKCRAAVTWEAGKPLSIEEVEVAPPQAMEVRIKILYTALCHTDVYFWEAKGQTPVFPRILGHEAGGIVESVGEGVTDVAPGDHVLPVFTGECKECAHCKSEESNMCDLLRINVDRGVMIGDGKSRFTISGQPIFHFVGTSTFSEYTVIHVGCLAKINPEAPLDKVCILSCGISTGLGATLNVAKPAKGSTVAIFGLGAVGLAAMEGARLAGASRIIGVDINPAKYEQAKKFGCTEFVNPKDHDKPVQEVLIELTNGGVDRSVECTGNVNAMISAFECVHDGWGVAVLVGVPHKDDQFKTHPMNFLSEKTLKGTFFGNYKPRTDLPNVVEMYMKKELELEKFITHSVPFSEINTAFDLMLKGESLRCIMRMED</sequence>
<protein>
    <recommendedName>
        <fullName>Alcohol dehydrogenase 2</fullName>
        <ecNumber evidence="2">1.1.1.1</ecNumber>
    </recommendedName>
</protein>
<reference key="1">
    <citation type="journal article" date="1985" name="Nucleic Acids Res.">
        <title>Molecular analysis of the alcohol dehydrogenase 2 (Adh2) gene of maize.</title>
        <authorList>
            <person name="Dennis E.S."/>
            <person name="Sachs M.M."/>
            <person name="Gerlach W.L."/>
            <person name="Finnegan E.J."/>
            <person name="Peacock W.J."/>
        </authorList>
    </citation>
    <scope>NUCLEOTIDE SEQUENCE [MRNA]</scope>
</reference>
<feature type="chain" id="PRO_0000160705" description="Alcohol dehydrogenase 2">
    <location>
        <begin position="1"/>
        <end position="379"/>
    </location>
</feature>
<feature type="binding site" evidence="2">
    <location>
        <position position="47"/>
    </location>
    <ligand>
        <name>Zn(2+)</name>
        <dbReference type="ChEBI" id="CHEBI:29105"/>
        <label>1</label>
        <note>catalytic</note>
    </ligand>
</feature>
<feature type="binding site" evidence="2">
    <location>
        <position position="49"/>
    </location>
    <ligand>
        <name>an alcohol</name>
        <dbReference type="ChEBI" id="CHEBI:30879"/>
    </ligand>
</feature>
<feature type="binding site" evidence="2">
    <location>
        <position position="49"/>
    </location>
    <ligand>
        <name>NAD(+)</name>
        <dbReference type="ChEBI" id="CHEBI:57540"/>
    </ligand>
</feature>
<feature type="binding site" evidence="2">
    <location>
        <position position="49"/>
    </location>
    <ligand>
        <name>Zn(2+)</name>
        <dbReference type="ChEBI" id="CHEBI:29105"/>
        <label>1</label>
        <note>catalytic</note>
    </ligand>
</feature>
<feature type="binding site" evidence="1">
    <location>
        <position position="69"/>
    </location>
    <ligand>
        <name>an alcohol</name>
        <dbReference type="ChEBI" id="CHEBI:30879"/>
    </ligand>
</feature>
<feature type="binding site" evidence="2">
    <location>
        <position position="69"/>
    </location>
    <ligand>
        <name>Zn(2+)</name>
        <dbReference type="ChEBI" id="CHEBI:29105"/>
        <label>1</label>
        <note>catalytic</note>
    </ligand>
</feature>
<feature type="binding site" evidence="2">
    <location>
        <position position="99"/>
    </location>
    <ligand>
        <name>Zn(2+)</name>
        <dbReference type="ChEBI" id="CHEBI:29105"/>
        <label>2</label>
    </ligand>
</feature>
<feature type="binding site" evidence="2">
    <location>
        <position position="102"/>
    </location>
    <ligand>
        <name>Zn(2+)</name>
        <dbReference type="ChEBI" id="CHEBI:29105"/>
        <label>2</label>
    </ligand>
</feature>
<feature type="binding site" evidence="2">
    <location>
        <position position="105"/>
    </location>
    <ligand>
        <name>Zn(2+)</name>
        <dbReference type="ChEBI" id="CHEBI:29105"/>
        <label>2</label>
    </ligand>
</feature>
<feature type="binding site" evidence="2">
    <location>
        <position position="113"/>
    </location>
    <ligand>
        <name>Zn(2+)</name>
        <dbReference type="ChEBI" id="CHEBI:29105"/>
        <label>2</label>
    </ligand>
</feature>
<feature type="binding site" evidence="2">
    <location>
        <position position="177"/>
    </location>
    <ligand>
        <name>Zn(2+)</name>
        <dbReference type="ChEBI" id="CHEBI:29105"/>
        <label>1</label>
        <note>catalytic</note>
    </ligand>
</feature>
<feature type="binding site" evidence="2">
    <location>
        <begin position="202"/>
        <end position="207"/>
    </location>
    <ligand>
        <name>NAD(+)</name>
        <dbReference type="ChEBI" id="CHEBI:57540"/>
    </ligand>
</feature>
<feature type="binding site" evidence="2">
    <location>
        <position position="226"/>
    </location>
    <ligand>
        <name>NAD(+)</name>
        <dbReference type="ChEBI" id="CHEBI:57540"/>
    </ligand>
</feature>
<feature type="binding site" evidence="2">
    <location>
        <position position="231"/>
    </location>
    <ligand>
        <name>NAD(+)</name>
        <dbReference type="ChEBI" id="CHEBI:57540"/>
    </ligand>
</feature>
<feature type="binding site" evidence="2">
    <location>
        <position position="272"/>
    </location>
    <ligand>
        <name>NAD(+)</name>
        <dbReference type="ChEBI" id="CHEBI:57540"/>
    </ligand>
</feature>
<feature type="binding site" evidence="1">
    <location>
        <begin position="295"/>
        <end position="297"/>
    </location>
    <ligand>
        <name>NAD(+)</name>
        <dbReference type="ChEBI" id="CHEBI:57540"/>
    </ligand>
</feature>
<feature type="binding site" evidence="2">
    <location>
        <position position="295"/>
    </location>
    <ligand>
        <name>NAD(+)</name>
        <dbReference type="ChEBI" id="CHEBI:57540"/>
    </ligand>
</feature>
<feature type="binding site" evidence="2">
    <location>
        <position position="322"/>
    </location>
    <ligand>
        <name>NAD(+)</name>
        <dbReference type="ChEBI" id="CHEBI:57540"/>
    </ligand>
</feature>
<feature type="binding site" evidence="2">
    <location>
        <position position="372"/>
    </location>
    <ligand>
        <name>NAD(+)</name>
        <dbReference type="ChEBI" id="CHEBI:57540"/>
    </ligand>
</feature>
<comment type="catalytic activity">
    <reaction evidence="2">
        <text>a primary alcohol + NAD(+) = an aldehyde + NADH + H(+)</text>
        <dbReference type="Rhea" id="RHEA:10736"/>
        <dbReference type="ChEBI" id="CHEBI:15378"/>
        <dbReference type="ChEBI" id="CHEBI:15734"/>
        <dbReference type="ChEBI" id="CHEBI:17478"/>
        <dbReference type="ChEBI" id="CHEBI:57540"/>
        <dbReference type="ChEBI" id="CHEBI:57945"/>
        <dbReference type="EC" id="1.1.1.1"/>
    </reaction>
</comment>
<comment type="catalytic activity">
    <reaction evidence="2">
        <text>a secondary alcohol + NAD(+) = a ketone + NADH + H(+)</text>
        <dbReference type="Rhea" id="RHEA:10740"/>
        <dbReference type="ChEBI" id="CHEBI:15378"/>
        <dbReference type="ChEBI" id="CHEBI:17087"/>
        <dbReference type="ChEBI" id="CHEBI:35681"/>
        <dbReference type="ChEBI" id="CHEBI:57540"/>
        <dbReference type="ChEBI" id="CHEBI:57945"/>
        <dbReference type="EC" id="1.1.1.1"/>
    </reaction>
</comment>
<comment type="cofactor">
    <cofactor evidence="2">
        <name>Zn(2+)</name>
        <dbReference type="ChEBI" id="CHEBI:29105"/>
    </cofactor>
    <text evidence="2">Binds 2 Zn(2+) ions per subunit.</text>
</comment>
<comment type="subunit">
    <text evidence="2">Homodimer.</text>
</comment>
<comment type="subcellular location">
    <subcellularLocation>
        <location evidence="2">Cytoplasm</location>
    </subcellularLocation>
</comment>
<comment type="miscellaneous">
    <text evidence="3">In maize there are two isozymes.</text>
</comment>
<comment type="similarity">
    <text evidence="3">Belongs to the zinc-containing alcohol dehydrogenase family.</text>
</comment>
<evidence type="ECO:0000250" key="1">
    <source>
        <dbReference type="UniProtKB" id="P00327"/>
    </source>
</evidence>
<evidence type="ECO:0000250" key="2">
    <source>
        <dbReference type="UniProtKB" id="P06525"/>
    </source>
</evidence>
<evidence type="ECO:0000305" key="3"/>